<dbReference type="EMBL" id="DQ109022">
    <property type="protein sequence ID" value="AAZ92452.1"/>
    <property type="molecule type" value="Genomic_DNA"/>
</dbReference>
<dbReference type="EMBL" id="DQ109024">
    <property type="protein sequence ID" value="AAZ92454.1"/>
    <property type="molecule type" value="Genomic_DNA"/>
</dbReference>
<dbReference type="EMBL" id="DQ109026">
    <property type="protein sequence ID" value="AAZ92456.1"/>
    <property type="molecule type" value="Genomic_DNA"/>
</dbReference>
<dbReference type="EMBL" id="DQ109027">
    <property type="protein sequence ID" value="AAZ92457.1"/>
    <property type="molecule type" value="Genomic_DNA"/>
</dbReference>
<dbReference type="EMBL" id="DQ109028">
    <property type="protein sequence ID" value="AAZ92458.1"/>
    <property type="molecule type" value="Genomic_DNA"/>
</dbReference>
<dbReference type="EMBL" id="DQ109030">
    <property type="protein sequence ID" value="AAZ92460.1"/>
    <property type="molecule type" value="Genomic_DNA"/>
</dbReference>
<dbReference type="EMBL" id="DQ109031">
    <property type="protein sequence ID" value="AAZ92461.1"/>
    <property type="molecule type" value="Genomic_DNA"/>
</dbReference>
<dbReference type="EMBL" id="DQ109032">
    <property type="protein sequence ID" value="AAZ92462.1"/>
    <property type="molecule type" value="Genomic_DNA"/>
</dbReference>
<dbReference type="EMBL" id="DQ234881">
    <property type="protein sequence ID" value="ABB80430.1"/>
    <property type="molecule type" value="Genomic_DNA"/>
</dbReference>
<dbReference type="SMR" id="Q20FS0"/>
<dbReference type="GO" id="GO:0005743">
    <property type="term" value="C:mitochondrial inner membrane"/>
    <property type="evidence" value="ECO:0007669"/>
    <property type="project" value="UniProtKB-SubCell"/>
</dbReference>
<dbReference type="GO" id="GO:0045275">
    <property type="term" value="C:respiratory chain complex III"/>
    <property type="evidence" value="ECO:0007669"/>
    <property type="project" value="InterPro"/>
</dbReference>
<dbReference type="GO" id="GO:0046872">
    <property type="term" value="F:metal ion binding"/>
    <property type="evidence" value="ECO:0007669"/>
    <property type="project" value="UniProtKB-KW"/>
</dbReference>
<dbReference type="GO" id="GO:0008121">
    <property type="term" value="F:ubiquinol-cytochrome-c reductase activity"/>
    <property type="evidence" value="ECO:0007669"/>
    <property type="project" value="InterPro"/>
</dbReference>
<dbReference type="GO" id="GO:0006122">
    <property type="term" value="P:mitochondrial electron transport, ubiquinol to cytochrome c"/>
    <property type="evidence" value="ECO:0007669"/>
    <property type="project" value="TreeGrafter"/>
</dbReference>
<dbReference type="CDD" id="cd00290">
    <property type="entry name" value="cytochrome_b_C"/>
    <property type="match status" value="1"/>
</dbReference>
<dbReference type="CDD" id="cd00284">
    <property type="entry name" value="Cytochrome_b_N"/>
    <property type="match status" value="1"/>
</dbReference>
<dbReference type="FunFam" id="1.20.810.10:FF:000002">
    <property type="entry name" value="Cytochrome b"/>
    <property type="match status" value="1"/>
</dbReference>
<dbReference type="Gene3D" id="1.20.810.10">
    <property type="entry name" value="Cytochrome Bc1 Complex, Chain C"/>
    <property type="match status" value="1"/>
</dbReference>
<dbReference type="InterPro" id="IPR005798">
    <property type="entry name" value="Cyt_b/b6_C"/>
</dbReference>
<dbReference type="InterPro" id="IPR036150">
    <property type="entry name" value="Cyt_b/b6_C_sf"/>
</dbReference>
<dbReference type="InterPro" id="IPR005797">
    <property type="entry name" value="Cyt_b/b6_N"/>
</dbReference>
<dbReference type="InterPro" id="IPR027387">
    <property type="entry name" value="Cytb/b6-like_sf"/>
</dbReference>
<dbReference type="InterPro" id="IPR030689">
    <property type="entry name" value="Cytochrome_b"/>
</dbReference>
<dbReference type="InterPro" id="IPR048260">
    <property type="entry name" value="Cytochrome_b_C_euk/bac"/>
</dbReference>
<dbReference type="InterPro" id="IPR048259">
    <property type="entry name" value="Cytochrome_b_N_euk/bac"/>
</dbReference>
<dbReference type="InterPro" id="IPR016174">
    <property type="entry name" value="Di-haem_cyt_TM"/>
</dbReference>
<dbReference type="PANTHER" id="PTHR19271">
    <property type="entry name" value="CYTOCHROME B"/>
    <property type="match status" value="1"/>
</dbReference>
<dbReference type="PANTHER" id="PTHR19271:SF16">
    <property type="entry name" value="CYTOCHROME B"/>
    <property type="match status" value="1"/>
</dbReference>
<dbReference type="Pfam" id="PF00032">
    <property type="entry name" value="Cytochrom_B_C"/>
    <property type="match status" value="1"/>
</dbReference>
<dbReference type="Pfam" id="PF00033">
    <property type="entry name" value="Cytochrome_B"/>
    <property type="match status" value="1"/>
</dbReference>
<dbReference type="PIRSF" id="PIRSF038885">
    <property type="entry name" value="COB"/>
    <property type="match status" value="1"/>
</dbReference>
<dbReference type="SUPFAM" id="SSF81648">
    <property type="entry name" value="a domain/subunit of cytochrome bc1 complex (Ubiquinol-cytochrome c reductase)"/>
    <property type="match status" value="1"/>
</dbReference>
<dbReference type="SUPFAM" id="SSF81342">
    <property type="entry name" value="Transmembrane di-heme cytochromes"/>
    <property type="match status" value="1"/>
</dbReference>
<dbReference type="PROSITE" id="PS51003">
    <property type="entry name" value="CYTB_CTER"/>
    <property type="match status" value="1"/>
</dbReference>
<dbReference type="PROSITE" id="PS51002">
    <property type="entry name" value="CYTB_NTER"/>
    <property type="match status" value="1"/>
</dbReference>
<proteinExistence type="inferred from homology"/>
<evidence type="ECO:0000250" key="1"/>
<evidence type="ECO:0000250" key="2">
    <source>
        <dbReference type="UniProtKB" id="P00157"/>
    </source>
</evidence>
<evidence type="ECO:0000255" key="3">
    <source>
        <dbReference type="PROSITE-ProRule" id="PRU00967"/>
    </source>
</evidence>
<evidence type="ECO:0000255" key="4">
    <source>
        <dbReference type="PROSITE-ProRule" id="PRU00968"/>
    </source>
</evidence>
<accession>Q20FS0</accession>
<geneLocation type="mitochondrion"/>
<feature type="chain" id="PRO_0000254702" description="Cytochrome b">
    <location>
        <begin position="1"/>
        <end position="379"/>
    </location>
</feature>
<feature type="transmembrane region" description="Helical" evidence="2">
    <location>
        <begin position="33"/>
        <end position="53"/>
    </location>
</feature>
<feature type="transmembrane region" description="Helical" evidence="2">
    <location>
        <begin position="77"/>
        <end position="98"/>
    </location>
</feature>
<feature type="transmembrane region" description="Helical" evidence="2">
    <location>
        <begin position="113"/>
        <end position="133"/>
    </location>
</feature>
<feature type="transmembrane region" description="Helical" evidence="2">
    <location>
        <begin position="178"/>
        <end position="198"/>
    </location>
</feature>
<feature type="transmembrane region" description="Helical" evidence="2">
    <location>
        <begin position="226"/>
        <end position="246"/>
    </location>
</feature>
<feature type="transmembrane region" description="Helical" evidence="2">
    <location>
        <begin position="288"/>
        <end position="308"/>
    </location>
</feature>
<feature type="transmembrane region" description="Helical" evidence="2">
    <location>
        <begin position="320"/>
        <end position="340"/>
    </location>
</feature>
<feature type="transmembrane region" description="Helical" evidence="2">
    <location>
        <begin position="347"/>
        <end position="367"/>
    </location>
</feature>
<feature type="binding site" description="axial binding residue" evidence="2">
    <location>
        <position position="83"/>
    </location>
    <ligand>
        <name>heme b</name>
        <dbReference type="ChEBI" id="CHEBI:60344"/>
        <label>b562</label>
    </ligand>
    <ligandPart>
        <name>Fe</name>
        <dbReference type="ChEBI" id="CHEBI:18248"/>
    </ligandPart>
</feature>
<feature type="binding site" description="axial binding residue" evidence="2">
    <location>
        <position position="97"/>
    </location>
    <ligand>
        <name>heme b</name>
        <dbReference type="ChEBI" id="CHEBI:60344"/>
        <label>b566</label>
    </ligand>
    <ligandPart>
        <name>Fe</name>
        <dbReference type="ChEBI" id="CHEBI:18248"/>
    </ligandPart>
</feature>
<feature type="binding site" description="axial binding residue" evidence="2">
    <location>
        <position position="182"/>
    </location>
    <ligand>
        <name>heme b</name>
        <dbReference type="ChEBI" id="CHEBI:60344"/>
        <label>b562</label>
    </ligand>
    <ligandPart>
        <name>Fe</name>
        <dbReference type="ChEBI" id="CHEBI:18248"/>
    </ligandPart>
</feature>
<feature type="binding site" description="axial binding residue" evidence="2">
    <location>
        <position position="196"/>
    </location>
    <ligand>
        <name>heme b</name>
        <dbReference type="ChEBI" id="CHEBI:60344"/>
        <label>b566</label>
    </ligand>
    <ligandPart>
        <name>Fe</name>
        <dbReference type="ChEBI" id="CHEBI:18248"/>
    </ligandPart>
</feature>
<feature type="binding site" evidence="2">
    <location>
        <position position="201"/>
    </location>
    <ligand>
        <name>a ubiquinone</name>
        <dbReference type="ChEBI" id="CHEBI:16389"/>
    </ligand>
</feature>
<keyword id="KW-0249">Electron transport</keyword>
<keyword id="KW-0349">Heme</keyword>
<keyword id="KW-0408">Iron</keyword>
<keyword id="KW-0472">Membrane</keyword>
<keyword id="KW-0479">Metal-binding</keyword>
<keyword id="KW-0496">Mitochondrion</keyword>
<keyword id="KW-0999">Mitochondrion inner membrane</keyword>
<keyword id="KW-0679">Respiratory chain</keyword>
<keyword id="KW-0812">Transmembrane</keyword>
<keyword id="KW-1133">Transmembrane helix</keyword>
<keyword id="KW-0813">Transport</keyword>
<keyword id="KW-0830">Ubiquinone</keyword>
<comment type="function">
    <text evidence="2">Component of the ubiquinol-cytochrome c reductase complex (complex III or cytochrome b-c1 complex) that is part of the mitochondrial respiratory chain. The b-c1 complex mediates electron transfer from ubiquinol to cytochrome c. Contributes to the generation of a proton gradient across the mitochondrial membrane that is then used for ATP synthesis.</text>
</comment>
<comment type="cofactor">
    <cofactor evidence="2">
        <name>heme b</name>
        <dbReference type="ChEBI" id="CHEBI:60344"/>
    </cofactor>
    <text evidence="2">Binds 2 heme b groups non-covalently.</text>
</comment>
<comment type="subunit">
    <text evidence="2">The cytochrome bc1 complex contains 11 subunits: 3 respiratory subunits (MT-CYB, CYC1 and UQCRFS1), 2 core proteins (UQCRC1 and UQCRC2) and 6 low-molecular weight proteins (UQCRH/QCR6, UQCRB/QCR7, UQCRQ/QCR8, UQCR10/QCR9, UQCR11/QCR10 and a cleavage product of UQCRFS1). This cytochrome bc1 complex then forms a dimer.</text>
</comment>
<comment type="subcellular location">
    <subcellularLocation>
        <location evidence="2">Mitochondrion inner membrane</location>
        <topology evidence="2">Multi-pass membrane protein</topology>
    </subcellularLocation>
</comment>
<comment type="miscellaneous">
    <text evidence="1">Heme 1 (or BL or b562) is low-potential and absorbs at about 562 nm, and heme 2 (or BH or b566) is high-potential and absorbs at about 566 nm.</text>
</comment>
<comment type="similarity">
    <text evidence="3 4">Belongs to the cytochrome b family.</text>
</comment>
<comment type="caution">
    <text evidence="2">The full-length protein contains only eight transmembrane helices, not nine as predicted by bioinformatics tools.</text>
</comment>
<gene>
    <name type="primary">MT-CYB</name>
    <name type="synonym">COB</name>
    <name type="synonym">CYTB</name>
    <name type="synonym">MTCYB</name>
</gene>
<name>CYB_LEPAN</name>
<protein>
    <recommendedName>
        <fullName>Cytochrome b</fullName>
    </recommendedName>
    <alternativeName>
        <fullName>Complex III subunit 3</fullName>
    </alternativeName>
    <alternativeName>
        <fullName>Complex III subunit III</fullName>
    </alternativeName>
    <alternativeName>
        <fullName>Cytochrome b-c1 complex subunit 3</fullName>
    </alternativeName>
    <alternativeName>
        <fullName>Ubiquinol-cytochrome-c reductase complex cytochrome b subunit</fullName>
    </alternativeName>
</protein>
<sequence>MTNIRKKHPLLKIINNSLIDLPTPPNISSLWNFGSLLGACLTIQIITGLFLAMHYTADTTTAFSSVAHICRDVNYGWTIRYLHANGASMFFLCLFIHVGRGLYYGSFTLLETWNVGIILLFSVMATAFMGYVLPWGQMSFWGATVITNLLSAIPYVGTDLVEWIWGGFSVSKATLTRFFALHFILPFIISALVMIHLLFLHETGSNNPLGMPSNSDKIPFHPYYTTKDFLGLLLLILLLMTTALFYPDLLGDPDNYTPANPLNTPPHIKPEWYFLFAYAILRSIPNKLGGVLALILSILILMIIPFLQPNKQQTMTFRPLSQFLFWILVADLLTLTWIGGQPVEDPFINIGQMASMLYFFLMIFIMPTSCLIENKMLKW</sequence>
<organism>
    <name type="scientific">Lepilemur ankaranensis</name>
    <name type="common">Ankarana sportive lemur</name>
    <name type="synonym">Lepilemur septentrionalis ankaranensis</name>
    <dbReference type="NCBI Taxonomy" id="342401"/>
    <lineage>
        <taxon>Eukaryota</taxon>
        <taxon>Metazoa</taxon>
        <taxon>Chordata</taxon>
        <taxon>Craniata</taxon>
        <taxon>Vertebrata</taxon>
        <taxon>Euteleostomi</taxon>
        <taxon>Mammalia</taxon>
        <taxon>Eutheria</taxon>
        <taxon>Euarchontoglires</taxon>
        <taxon>Primates</taxon>
        <taxon>Strepsirrhini</taxon>
        <taxon>Lemuriformes</taxon>
        <taxon>Lepilemuridae</taxon>
        <taxon>Lepilemur</taxon>
    </lineage>
</organism>
<reference key="1">
    <citation type="journal article" date="2006" name="BMC Evol. Biol.">
        <title>Molecular phylogeny and taxonomic revision of the sportive lemurs (Lepilemur, Primates).</title>
        <authorList>
            <person name="Andriaholinirina N."/>
            <person name="Fausser J.-L."/>
            <person name="Roos C."/>
            <person name="Zinner D."/>
            <person name="Thalmann U."/>
            <person name="Rabarivola C."/>
            <person name="Ravoarimanana I."/>
            <person name="Ganzhorn J.U."/>
            <person name="Meier B."/>
            <person name="Hilgartner R."/>
            <person name="Walter L."/>
            <person name="Zaramody A."/>
            <person name="Langer C."/>
            <person name="Hahn T."/>
            <person name="Zimmermann E."/>
            <person name="Radespiel U."/>
            <person name="Craul M."/>
            <person name="Tomiuk J."/>
            <person name="Tattersall I."/>
            <person name="Rumpler Y."/>
        </authorList>
    </citation>
    <scope>NUCLEOTIDE SEQUENCE [GENOMIC DNA]</scope>
</reference>